<gene>
    <name evidence="2" type="primary">SUS1</name>
    <name type="ordered locus">DEHA2F02530g</name>
</gene>
<feature type="chain" id="PRO_0000367568" description="Transcription and mRNA export factor SUS1">
    <location>
        <begin position="1"/>
        <end position="101"/>
    </location>
</feature>
<dbReference type="EMBL" id="CR382138">
    <property type="protein sequence ID" value="CAG88781.2"/>
    <property type="molecule type" value="Genomic_DNA"/>
</dbReference>
<dbReference type="RefSeq" id="XP_460474.2">
    <property type="nucleotide sequence ID" value="XM_460474.1"/>
</dbReference>
<dbReference type="SMR" id="Q6BMU6"/>
<dbReference type="FunCoup" id="Q6BMU6">
    <property type="interactions" value="356"/>
</dbReference>
<dbReference type="STRING" id="284592.Q6BMU6"/>
<dbReference type="GeneID" id="2903052"/>
<dbReference type="KEGG" id="dha:DEHA2F02530g"/>
<dbReference type="VEuPathDB" id="FungiDB:DEHA2F02530g"/>
<dbReference type="eggNOG" id="ENOG502S9WJ">
    <property type="taxonomic scope" value="Eukaryota"/>
</dbReference>
<dbReference type="HOGENOM" id="CLU_134052_2_1_1"/>
<dbReference type="InParanoid" id="Q6BMU6"/>
<dbReference type="OMA" id="YESGWFD"/>
<dbReference type="OrthoDB" id="6221744at2759"/>
<dbReference type="Proteomes" id="UP000000599">
    <property type="component" value="Chromosome F"/>
</dbReference>
<dbReference type="GO" id="GO:0071819">
    <property type="term" value="C:DUBm complex"/>
    <property type="evidence" value="ECO:0007669"/>
    <property type="project" value="UniProtKB-UniRule"/>
</dbReference>
<dbReference type="GO" id="GO:0005643">
    <property type="term" value="C:nuclear pore"/>
    <property type="evidence" value="ECO:0007669"/>
    <property type="project" value="UniProtKB-UniRule"/>
</dbReference>
<dbReference type="GO" id="GO:0005654">
    <property type="term" value="C:nucleoplasm"/>
    <property type="evidence" value="ECO:0007669"/>
    <property type="project" value="UniProtKB-SubCell"/>
</dbReference>
<dbReference type="GO" id="GO:0000932">
    <property type="term" value="C:P-body"/>
    <property type="evidence" value="ECO:0007669"/>
    <property type="project" value="UniProtKB-SubCell"/>
</dbReference>
<dbReference type="GO" id="GO:0000124">
    <property type="term" value="C:SAGA complex"/>
    <property type="evidence" value="ECO:0007669"/>
    <property type="project" value="UniProtKB-UniRule"/>
</dbReference>
<dbReference type="GO" id="GO:0070390">
    <property type="term" value="C:transcription export complex 2"/>
    <property type="evidence" value="ECO:0007669"/>
    <property type="project" value="UniProtKB-UniRule"/>
</dbReference>
<dbReference type="GO" id="GO:0003713">
    <property type="term" value="F:transcription coactivator activity"/>
    <property type="evidence" value="ECO:0007669"/>
    <property type="project" value="UniProtKB-UniRule"/>
</dbReference>
<dbReference type="GO" id="GO:0006325">
    <property type="term" value="P:chromatin organization"/>
    <property type="evidence" value="ECO:0007669"/>
    <property type="project" value="UniProtKB-KW"/>
</dbReference>
<dbReference type="GO" id="GO:0006406">
    <property type="term" value="P:mRNA export from nucleus"/>
    <property type="evidence" value="ECO:0007669"/>
    <property type="project" value="UniProtKB-UniRule"/>
</dbReference>
<dbReference type="GO" id="GO:0015031">
    <property type="term" value="P:protein transport"/>
    <property type="evidence" value="ECO:0007669"/>
    <property type="project" value="UniProtKB-KW"/>
</dbReference>
<dbReference type="GO" id="GO:0006368">
    <property type="term" value="P:transcription elongation by RNA polymerase II"/>
    <property type="evidence" value="ECO:0007669"/>
    <property type="project" value="UniProtKB-UniRule"/>
</dbReference>
<dbReference type="Gene3D" id="1.10.246.140">
    <property type="match status" value="1"/>
</dbReference>
<dbReference type="HAMAP" id="MF_03046">
    <property type="entry name" value="ENY2_Sus1"/>
    <property type="match status" value="1"/>
</dbReference>
<dbReference type="InterPro" id="IPR018783">
    <property type="entry name" value="TF_ENY2"/>
</dbReference>
<dbReference type="InterPro" id="IPR038212">
    <property type="entry name" value="TF_EnY2_sf"/>
</dbReference>
<dbReference type="PANTHER" id="PTHR12514">
    <property type="entry name" value="ENHANCER OF YELLOW 2 TRANSCRIPTION FACTOR"/>
    <property type="match status" value="1"/>
</dbReference>
<dbReference type="Pfam" id="PF10163">
    <property type="entry name" value="EnY2"/>
    <property type="match status" value="1"/>
</dbReference>
<organism>
    <name type="scientific">Debaryomyces hansenii (strain ATCC 36239 / CBS 767 / BCRC 21394 / JCM 1990 / NBRC 0083 / IGC 2968)</name>
    <name type="common">Yeast</name>
    <name type="synonym">Torulaspora hansenii</name>
    <dbReference type="NCBI Taxonomy" id="284592"/>
    <lineage>
        <taxon>Eukaryota</taxon>
        <taxon>Fungi</taxon>
        <taxon>Dikarya</taxon>
        <taxon>Ascomycota</taxon>
        <taxon>Saccharomycotina</taxon>
        <taxon>Pichiomycetes</taxon>
        <taxon>Debaryomycetaceae</taxon>
        <taxon>Debaryomyces</taxon>
    </lineage>
</organism>
<protein>
    <recommendedName>
        <fullName evidence="2">Transcription and mRNA export factor SUS1</fullName>
    </recommendedName>
</protein>
<evidence type="ECO:0000250" key="1"/>
<evidence type="ECO:0000255" key="2">
    <source>
        <dbReference type="HAMAP-Rule" id="MF_03046"/>
    </source>
</evidence>
<keyword id="KW-0010">Activator</keyword>
<keyword id="KW-0156">Chromatin regulator</keyword>
<keyword id="KW-0963">Cytoplasm</keyword>
<keyword id="KW-0509">mRNA transport</keyword>
<keyword id="KW-0539">Nucleus</keyword>
<keyword id="KW-0653">Protein transport</keyword>
<keyword id="KW-1185">Reference proteome</keyword>
<keyword id="KW-0804">Transcription</keyword>
<keyword id="KW-0805">Transcription regulation</keyword>
<keyword id="KW-0811">Translocation</keyword>
<keyword id="KW-0813">Transport</keyword>
<reference key="1">
    <citation type="journal article" date="2004" name="Nature">
        <title>Genome evolution in yeasts.</title>
        <authorList>
            <person name="Dujon B."/>
            <person name="Sherman D."/>
            <person name="Fischer G."/>
            <person name="Durrens P."/>
            <person name="Casaregola S."/>
            <person name="Lafontaine I."/>
            <person name="de Montigny J."/>
            <person name="Marck C."/>
            <person name="Neuveglise C."/>
            <person name="Talla E."/>
            <person name="Goffard N."/>
            <person name="Frangeul L."/>
            <person name="Aigle M."/>
            <person name="Anthouard V."/>
            <person name="Babour A."/>
            <person name="Barbe V."/>
            <person name="Barnay S."/>
            <person name="Blanchin S."/>
            <person name="Beckerich J.-M."/>
            <person name="Beyne E."/>
            <person name="Bleykasten C."/>
            <person name="Boisrame A."/>
            <person name="Boyer J."/>
            <person name="Cattolico L."/>
            <person name="Confanioleri F."/>
            <person name="de Daruvar A."/>
            <person name="Despons L."/>
            <person name="Fabre E."/>
            <person name="Fairhead C."/>
            <person name="Ferry-Dumazet H."/>
            <person name="Groppi A."/>
            <person name="Hantraye F."/>
            <person name="Hennequin C."/>
            <person name="Jauniaux N."/>
            <person name="Joyet P."/>
            <person name="Kachouri R."/>
            <person name="Kerrest A."/>
            <person name="Koszul R."/>
            <person name="Lemaire M."/>
            <person name="Lesur I."/>
            <person name="Ma L."/>
            <person name="Muller H."/>
            <person name="Nicaud J.-M."/>
            <person name="Nikolski M."/>
            <person name="Oztas S."/>
            <person name="Ozier-Kalogeropoulos O."/>
            <person name="Pellenz S."/>
            <person name="Potier S."/>
            <person name="Richard G.-F."/>
            <person name="Straub M.-L."/>
            <person name="Suleau A."/>
            <person name="Swennen D."/>
            <person name="Tekaia F."/>
            <person name="Wesolowski-Louvel M."/>
            <person name="Westhof E."/>
            <person name="Wirth B."/>
            <person name="Zeniou-Meyer M."/>
            <person name="Zivanovic Y."/>
            <person name="Bolotin-Fukuhara M."/>
            <person name="Thierry A."/>
            <person name="Bouchier C."/>
            <person name="Caudron B."/>
            <person name="Scarpelli C."/>
            <person name="Gaillardin C."/>
            <person name="Weissenbach J."/>
            <person name="Wincker P."/>
            <person name="Souciet J.-L."/>
        </authorList>
    </citation>
    <scope>NUCLEOTIDE SEQUENCE [LARGE SCALE GENOMIC DNA]</scope>
    <source>
        <strain>ATCC 36239 / CBS 767 / BCRC 21394 / JCM 1990 / NBRC 0083 / IGC 2968</strain>
    </source>
</reference>
<accession>Q6BMU6</accession>
<sequence length="101" mass="11802">MTQQQDELDQIKSQIQEHLISSGNYDIINKQLKLQLYESGWFDKVTQLANRELQENSAHDTAVSFDQLFSFVKPKAEEMVPSNIKEDVLERLKDYLDDVIQ</sequence>
<comment type="function">
    <text evidence="1">Involved in mRNA export coupled transcription activation by association with both the TREX-2 and the SAGA complexes. At the promoters, SAGA is required for recruitment of the basal transcription machinery. It influences RNA polymerase II transcriptional activity through different activities such as TBP interaction and promoter selectivity, interaction with transcription activators, and chromatin modification through histone acetylation and deubiquitination. Within the SAGA complex, participates in a subcomplex required for deubiquitination of H2B and for the maintenance of steady-state H3 methylation levels. The TREX-2 complex functions in docking export-competent ribonucleoprotein particles (mRNPs) to the nuclear entrance of the nuclear pore complex (nuclear basket). TREX-2 participates in mRNA export and accurate chromatin positioning in the nucleus by tethering genes to the nuclear periphery. May also be involved in cytoplasmic mRNA decay by interaction with components of P-bodies (By similarity).</text>
</comment>
<comment type="subunit">
    <text evidence="2">Component of the nuclear pore complex (NPC)-associated TREX-2 complex (transcription and export complex 2), composed of at least SUS1, SAC3, THP1, SEM1, and CDC31. TREX-2 contains 2 SUS1 chains. The TREX-2 complex interacts with the nucleoporin NUP1. Component of the 1.8 MDa SAGA transcription coactivator-HAT complex. SAGA is built of 5 distinct domains with specialized functions. Within the SAGA complex, SUS1, SGF11, SGF73 and UBP8 form an additional subcomplex of SAGA called the DUB module (deubiquitination module). Interacts directly with THP1, SAC3, SGF11, and with the RNA polymerase II.</text>
</comment>
<comment type="subcellular location">
    <subcellularLocation>
        <location evidence="2">Nucleus</location>
        <location evidence="2">Nucleoplasm</location>
    </subcellularLocation>
    <subcellularLocation>
        <location evidence="2">Cytoplasm</location>
        <location evidence="2">P-body</location>
    </subcellularLocation>
</comment>
<comment type="similarity">
    <text evidence="2">Belongs to the ENY2 family.</text>
</comment>
<name>SUS1_DEBHA</name>
<proteinExistence type="inferred from homology"/>